<dbReference type="EMBL" id="AP006715">
    <property type="protein sequence ID" value="BAE92449.1"/>
    <property type="molecule type" value="Genomic_DNA"/>
</dbReference>
<dbReference type="RefSeq" id="YP_537006.1">
    <property type="nucleotide sequence ID" value="NC_007932.1"/>
</dbReference>
<dbReference type="SMR" id="Q1XDG2"/>
<dbReference type="GeneID" id="3978787"/>
<dbReference type="GO" id="GO:0009535">
    <property type="term" value="C:chloroplast thylakoid membrane"/>
    <property type="evidence" value="ECO:0007669"/>
    <property type="project" value="UniProtKB-SubCell"/>
</dbReference>
<dbReference type="GO" id="GO:0015979">
    <property type="term" value="P:photosynthesis"/>
    <property type="evidence" value="ECO:0007669"/>
    <property type="project" value="InterPro"/>
</dbReference>
<dbReference type="HAMAP" id="MF_00293">
    <property type="entry name" value="PSII_PsbN"/>
    <property type="match status" value="1"/>
</dbReference>
<dbReference type="InterPro" id="IPR003398">
    <property type="entry name" value="PSII_PsbN"/>
</dbReference>
<dbReference type="NCBIfam" id="NF009650">
    <property type="entry name" value="PRK13183.1"/>
    <property type="match status" value="1"/>
</dbReference>
<dbReference type="PANTHER" id="PTHR35326">
    <property type="entry name" value="PROTEIN PSBN"/>
    <property type="match status" value="1"/>
</dbReference>
<dbReference type="PANTHER" id="PTHR35326:SF3">
    <property type="entry name" value="PROTEIN PSBN"/>
    <property type="match status" value="1"/>
</dbReference>
<dbReference type="Pfam" id="PF02468">
    <property type="entry name" value="PsbN"/>
    <property type="match status" value="1"/>
</dbReference>
<feature type="chain" id="PRO_0000276284" description="Protein PsbN">
    <location>
        <begin position="1"/>
        <end position="43"/>
    </location>
</feature>
<feature type="transmembrane region" description="Helical" evidence="1">
    <location>
        <begin position="5"/>
        <end position="27"/>
    </location>
</feature>
<organism>
    <name type="scientific">Pyropia yezoensis</name>
    <name type="common">Susabi-nori</name>
    <name type="synonym">Porphyra yezoensis</name>
    <dbReference type="NCBI Taxonomy" id="2788"/>
    <lineage>
        <taxon>Eukaryota</taxon>
        <taxon>Rhodophyta</taxon>
        <taxon>Bangiophyceae</taxon>
        <taxon>Bangiales</taxon>
        <taxon>Bangiaceae</taxon>
        <taxon>Pyropia</taxon>
    </lineage>
</organism>
<evidence type="ECO:0000255" key="1">
    <source>
        <dbReference type="HAMAP-Rule" id="MF_00293"/>
    </source>
</evidence>
<accession>Q1XDG2</accession>
<geneLocation type="chloroplast"/>
<comment type="function">
    <text evidence="1">May play a role in photosystem I and II biogenesis.</text>
</comment>
<comment type="subcellular location">
    <subcellularLocation>
        <location evidence="1">Plastid</location>
        <location evidence="1">Chloroplast thylakoid membrane</location>
        <topology evidence="1">Single-pass membrane protein</topology>
    </subcellularLocation>
</comment>
<comment type="similarity">
    <text evidence="1">Belongs to the PsbN family.</text>
</comment>
<comment type="caution">
    <text evidence="1">Originally thought to be a component of PSII; based on experiments in Synechocystis, N.tabacum and barley, and its absence from PSII in T.elongatus and T.vulcanus, this is probably not true.</text>
</comment>
<keyword id="KW-0150">Chloroplast</keyword>
<keyword id="KW-0472">Membrane</keyword>
<keyword id="KW-0934">Plastid</keyword>
<keyword id="KW-0793">Thylakoid</keyword>
<keyword id="KW-0812">Transmembrane</keyword>
<keyword id="KW-1133">Transmembrane helix</keyword>
<protein>
    <recommendedName>
        <fullName evidence="1">Protein PsbN</fullName>
    </recommendedName>
</protein>
<name>PSBN_PYRYE</name>
<proteinExistence type="inferred from homology"/>
<sequence>METATVLSIFISSLLLGITGYSIYTAFGPASKDLRDPFEEHEE</sequence>
<gene>
    <name evidence="1" type="primary">psbN</name>
</gene>
<reference key="1">
    <citation type="submission" date="2003-11" db="EMBL/GenBank/DDBJ databases">
        <title>Whole genome sequence of Porphyra yezoensis chloroplast.</title>
        <authorList>
            <person name="Kunimoto M."/>
            <person name="Morishima K."/>
            <person name="Yoshikawa M."/>
            <person name="Fukuda S."/>
            <person name="Kobayashi T."/>
            <person name="Kobayashi M."/>
            <person name="Okazaki T."/>
            <person name="Ohara I."/>
            <person name="Nakayama I."/>
        </authorList>
    </citation>
    <scope>NUCLEOTIDE SEQUENCE [LARGE SCALE GENOMIC DNA]</scope>
    <source>
        <strain>U-51</strain>
    </source>
</reference>